<feature type="chain" id="PRO_0000220601" description="Uncharacterized protein At2g34160">
    <location>
        <begin position="1"/>
        <end position="130"/>
    </location>
</feature>
<feature type="modified residue" description="N-acetylmethionine" evidence="2">
    <location>
        <position position="1"/>
    </location>
</feature>
<feature type="strand" evidence="3">
    <location>
        <begin position="22"/>
        <end position="24"/>
    </location>
</feature>
<feature type="helix" evidence="3">
    <location>
        <begin position="32"/>
        <end position="46"/>
    </location>
</feature>
<feature type="strand" evidence="3">
    <location>
        <begin position="47"/>
        <end position="54"/>
    </location>
</feature>
<feature type="helix" evidence="3">
    <location>
        <begin position="55"/>
        <end position="57"/>
    </location>
</feature>
<feature type="helix" evidence="3">
    <location>
        <begin position="58"/>
        <end position="70"/>
    </location>
</feature>
<feature type="strand" evidence="3">
    <location>
        <begin position="73"/>
        <end position="86"/>
    </location>
</feature>
<feature type="turn" evidence="3">
    <location>
        <begin position="89"/>
        <end position="92"/>
    </location>
</feature>
<feature type="strand" evidence="3">
    <location>
        <begin position="95"/>
        <end position="106"/>
    </location>
</feature>
<feature type="helix" evidence="3">
    <location>
        <begin position="110"/>
        <end position="116"/>
    </location>
</feature>
<gene>
    <name type="ordered locus">At2g34160</name>
    <name type="ORF">T14G11.28</name>
</gene>
<evidence type="ECO:0000305" key="1">
    <source ref="6"/>
</evidence>
<evidence type="ECO:0007744" key="2">
    <source>
    </source>
</evidence>
<evidence type="ECO:0007829" key="3">
    <source>
        <dbReference type="PDB" id="1VM0"/>
    </source>
</evidence>
<name>Y2416_ARATH</name>
<sequence>MEEITDGVNNMNLATDSQKKNRIQVSNTKKPLFFYVNLAKRYMQQYNDVELSALGMAIATVVTVTEILKNNGFAVEKKIMTSTVDIKDDARGRPVQKAKIEITLVKSEKFDELMAAANEEKEDAEAQVQN</sequence>
<keyword id="KW-0002">3D-structure</keyword>
<keyword id="KW-0007">Acetylation</keyword>
<keyword id="KW-1185">Reference proteome</keyword>
<proteinExistence type="evidence at protein level"/>
<reference key="1">
    <citation type="journal article" date="1999" name="Nature">
        <title>Sequence and analysis of chromosome 2 of the plant Arabidopsis thaliana.</title>
        <authorList>
            <person name="Lin X."/>
            <person name="Kaul S."/>
            <person name="Rounsley S.D."/>
            <person name="Shea T.P."/>
            <person name="Benito M.-I."/>
            <person name="Town C.D."/>
            <person name="Fujii C.Y."/>
            <person name="Mason T.M."/>
            <person name="Bowman C.L."/>
            <person name="Barnstead M.E."/>
            <person name="Feldblyum T.V."/>
            <person name="Buell C.R."/>
            <person name="Ketchum K.A."/>
            <person name="Lee J.J."/>
            <person name="Ronning C.M."/>
            <person name="Koo H.L."/>
            <person name="Moffat K.S."/>
            <person name="Cronin L.A."/>
            <person name="Shen M."/>
            <person name="Pai G."/>
            <person name="Van Aken S."/>
            <person name="Umayam L."/>
            <person name="Tallon L.J."/>
            <person name="Gill J.E."/>
            <person name="Adams M.D."/>
            <person name="Carrera A.J."/>
            <person name="Creasy T.H."/>
            <person name="Goodman H.M."/>
            <person name="Somerville C.R."/>
            <person name="Copenhaver G.P."/>
            <person name="Preuss D."/>
            <person name="Nierman W.C."/>
            <person name="White O."/>
            <person name="Eisen J.A."/>
            <person name="Salzberg S.L."/>
            <person name="Fraser C.M."/>
            <person name="Venter J.C."/>
        </authorList>
    </citation>
    <scope>NUCLEOTIDE SEQUENCE [LARGE SCALE GENOMIC DNA]</scope>
    <source>
        <strain>cv. Columbia</strain>
    </source>
</reference>
<reference key="2">
    <citation type="journal article" date="2017" name="Plant J.">
        <title>Araport11: a complete reannotation of the Arabidopsis thaliana reference genome.</title>
        <authorList>
            <person name="Cheng C.Y."/>
            <person name="Krishnakumar V."/>
            <person name="Chan A.P."/>
            <person name="Thibaud-Nissen F."/>
            <person name="Schobel S."/>
            <person name="Town C.D."/>
        </authorList>
    </citation>
    <scope>GENOME REANNOTATION</scope>
    <source>
        <strain>cv. Columbia</strain>
    </source>
</reference>
<reference key="3">
    <citation type="submission" date="2002-03" db="EMBL/GenBank/DDBJ databases">
        <title>Full-length cDNA from Arabidopsis thaliana.</title>
        <authorList>
            <person name="Brover V.V."/>
            <person name="Troukhan M.E."/>
            <person name="Alexandrov N.A."/>
            <person name="Lu Y.-P."/>
            <person name="Flavell R.B."/>
            <person name="Feldmann K.A."/>
        </authorList>
    </citation>
    <scope>NUCLEOTIDE SEQUENCE [LARGE SCALE MRNA]</scope>
</reference>
<reference key="4">
    <citation type="journal article" date="2002" name="Science">
        <title>Functional annotation of a full-length Arabidopsis cDNA collection.</title>
        <authorList>
            <person name="Seki M."/>
            <person name="Narusaka M."/>
            <person name="Kamiya A."/>
            <person name="Ishida J."/>
            <person name="Satou M."/>
            <person name="Sakurai T."/>
            <person name="Nakajima M."/>
            <person name="Enju A."/>
            <person name="Akiyama K."/>
            <person name="Oono Y."/>
            <person name="Muramatsu M."/>
            <person name="Hayashizaki Y."/>
            <person name="Kawai J."/>
            <person name="Carninci P."/>
            <person name="Itoh M."/>
            <person name="Ishii Y."/>
            <person name="Arakawa T."/>
            <person name="Shibata K."/>
            <person name="Shinagawa A."/>
            <person name="Shinozaki K."/>
        </authorList>
    </citation>
    <scope>NUCLEOTIDE SEQUENCE [LARGE SCALE MRNA]</scope>
    <source>
        <strain>cv. Columbia</strain>
    </source>
</reference>
<reference key="5">
    <citation type="journal article" date="2012" name="Mol. Cell. Proteomics">
        <title>Comparative large-scale characterisation of plant vs. mammal proteins reveals similar and idiosyncratic N-alpha acetylation features.</title>
        <authorList>
            <person name="Bienvenut W.V."/>
            <person name="Sumpton D."/>
            <person name="Martinez A."/>
            <person name="Lilla S."/>
            <person name="Espagne C."/>
            <person name="Meinnel T."/>
            <person name="Giglione C."/>
        </authorList>
    </citation>
    <scope>ACETYLATION [LARGE SCALE ANALYSIS] AT MET-1</scope>
    <scope>IDENTIFICATION BY MASS SPECTROMETRY [LARGE SCALE ANALYSIS]</scope>
</reference>
<reference key="6">
    <citation type="submission" date="2005-02" db="PDB data bank">
        <title>X-ray structure of gene product from Arabidopsis thaliana At2g34160.</title>
        <authorList>
            <consortium name="Center for eukaryotic structural genomics (CESG)"/>
        </authorList>
    </citation>
    <scope>X-RAY CRYSTALLOGRAPHY (1.8 ANGSTROMS) OF 2-130</scope>
    <scope>SUBUNIT</scope>
</reference>
<accession>O22969</accession>
<dbReference type="EMBL" id="AC002341">
    <property type="protein sequence ID" value="AAB67633.1"/>
    <property type="molecule type" value="Genomic_DNA"/>
</dbReference>
<dbReference type="EMBL" id="CP002685">
    <property type="protein sequence ID" value="AEC08926.1"/>
    <property type="molecule type" value="Genomic_DNA"/>
</dbReference>
<dbReference type="EMBL" id="AY084411">
    <property type="protein sequence ID" value="AAM60985.1"/>
    <property type="molecule type" value="mRNA"/>
</dbReference>
<dbReference type="EMBL" id="AK117501">
    <property type="protein sequence ID" value="BAC42164.1"/>
    <property type="molecule type" value="mRNA"/>
</dbReference>
<dbReference type="PIR" id="B84753">
    <property type="entry name" value="B84753"/>
</dbReference>
<dbReference type="RefSeq" id="NP_565781.1">
    <property type="nucleotide sequence ID" value="NM_128967.3"/>
</dbReference>
<dbReference type="PDB" id="1VM0">
    <property type="method" value="X-ray"/>
    <property type="resolution" value="1.80 A"/>
    <property type="chains" value="A/B=2-130"/>
</dbReference>
<dbReference type="PDB" id="2Q3V">
    <property type="method" value="X-ray"/>
    <property type="resolution" value="1.80 A"/>
    <property type="chains" value="A/B=2-130"/>
</dbReference>
<dbReference type="PDBsum" id="1VM0"/>
<dbReference type="PDBsum" id="2Q3V"/>
<dbReference type="SMR" id="O22969"/>
<dbReference type="BioGRID" id="3324">
    <property type="interactions" value="2"/>
</dbReference>
<dbReference type="FunCoup" id="O22969">
    <property type="interactions" value="381"/>
</dbReference>
<dbReference type="STRING" id="3702.O22969"/>
<dbReference type="iPTMnet" id="O22969"/>
<dbReference type="PaxDb" id="3702-AT2G34160.1"/>
<dbReference type="ProteomicsDB" id="242480"/>
<dbReference type="DNASU" id="817977"/>
<dbReference type="EnsemblPlants" id="AT2G34160.1">
    <property type="protein sequence ID" value="AT2G34160.1"/>
    <property type="gene ID" value="AT2G34160"/>
</dbReference>
<dbReference type="GeneID" id="817977"/>
<dbReference type="Gramene" id="AT2G34160.1">
    <property type="protein sequence ID" value="AT2G34160.1"/>
    <property type="gene ID" value="AT2G34160"/>
</dbReference>
<dbReference type="KEGG" id="ath:AT2G34160"/>
<dbReference type="Araport" id="AT2G34160"/>
<dbReference type="TAIR" id="AT2G34160">
    <property type="gene designation" value="IRP7"/>
</dbReference>
<dbReference type="eggNOG" id="ENOG502RZC2">
    <property type="taxonomic scope" value="Eukaryota"/>
</dbReference>
<dbReference type="HOGENOM" id="CLU_122141_1_0_1"/>
<dbReference type="InParanoid" id="O22969"/>
<dbReference type="OMA" id="AKVRYMQ"/>
<dbReference type="PhylomeDB" id="O22969"/>
<dbReference type="CD-CODE" id="4299E36E">
    <property type="entry name" value="Nucleolus"/>
</dbReference>
<dbReference type="EvolutionaryTrace" id="O22969"/>
<dbReference type="PRO" id="PR:O22969"/>
<dbReference type="Proteomes" id="UP000006548">
    <property type="component" value="Chromosome 2"/>
</dbReference>
<dbReference type="ExpressionAtlas" id="O22969">
    <property type="expression patterns" value="baseline and differential"/>
</dbReference>
<dbReference type="GO" id="GO:0005783">
    <property type="term" value="C:endoplasmic reticulum"/>
    <property type="evidence" value="ECO:0007005"/>
    <property type="project" value="TAIR"/>
</dbReference>
<dbReference type="GO" id="GO:0005634">
    <property type="term" value="C:nucleus"/>
    <property type="evidence" value="ECO:0000314"/>
    <property type="project" value="TAIR"/>
</dbReference>
<dbReference type="GO" id="GO:0003729">
    <property type="term" value="F:mRNA binding"/>
    <property type="evidence" value="ECO:0000314"/>
    <property type="project" value="TAIR"/>
</dbReference>
<dbReference type="GO" id="GO:0006364">
    <property type="term" value="P:rRNA processing"/>
    <property type="evidence" value="ECO:0000315"/>
    <property type="project" value="TAIR"/>
</dbReference>
<dbReference type="FunFam" id="3.30.110.20:FF:000005">
    <property type="entry name" value="Uncharacterized protein At2g34160"/>
    <property type="match status" value="1"/>
</dbReference>
<dbReference type="Gene3D" id="3.30.110.20">
    <property type="entry name" value="Alba-like domain"/>
    <property type="match status" value="1"/>
</dbReference>
<dbReference type="InterPro" id="IPR036882">
    <property type="entry name" value="Alba-like_dom_sf"/>
</dbReference>
<dbReference type="InterPro" id="IPR002775">
    <property type="entry name" value="DNA/RNA-bd_Alba-like"/>
</dbReference>
<dbReference type="InterPro" id="IPR014560">
    <property type="entry name" value="UCP030333_Alba"/>
</dbReference>
<dbReference type="PANTHER" id="PTHR31947:SF43">
    <property type="entry name" value="ALBA DNA_RNA-BINDING PROTEIN"/>
    <property type="match status" value="1"/>
</dbReference>
<dbReference type="PANTHER" id="PTHR31947">
    <property type="entry name" value="DNA/RNA-BINDING PROTEIN ALBA 3"/>
    <property type="match status" value="1"/>
</dbReference>
<dbReference type="Pfam" id="PF01918">
    <property type="entry name" value="Alba"/>
    <property type="match status" value="1"/>
</dbReference>
<dbReference type="PIRSF" id="PIRSF030333">
    <property type="entry name" value="UCP030333_Alba"/>
    <property type="match status" value="1"/>
</dbReference>
<dbReference type="SUPFAM" id="SSF82704">
    <property type="entry name" value="AlbA-like"/>
    <property type="match status" value="1"/>
</dbReference>
<comment type="subunit">
    <text evidence="1">Homotetramer.</text>
</comment>
<organism>
    <name type="scientific">Arabidopsis thaliana</name>
    <name type="common">Mouse-ear cress</name>
    <dbReference type="NCBI Taxonomy" id="3702"/>
    <lineage>
        <taxon>Eukaryota</taxon>
        <taxon>Viridiplantae</taxon>
        <taxon>Streptophyta</taxon>
        <taxon>Embryophyta</taxon>
        <taxon>Tracheophyta</taxon>
        <taxon>Spermatophyta</taxon>
        <taxon>Magnoliopsida</taxon>
        <taxon>eudicotyledons</taxon>
        <taxon>Gunneridae</taxon>
        <taxon>Pentapetalae</taxon>
        <taxon>rosids</taxon>
        <taxon>malvids</taxon>
        <taxon>Brassicales</taxon>
        <taxon>Brassicaceae</taxon>
        <taxon>Camelineae</taxon>
        <taxon>Arabidopsis</taxon>
    </lineage>
</organism>
<protein>
    <recommendedName>
        <fullName>Uncharacterized protein At2g34160</fullName>
    </recommendedName>
</protein>